<name>EFP_CORDI</name>
<reference key="1">
    <citation type="journal article" date="2003" name="Nucleic Acids Res.">
        <title>The complete genome sequence and analysis of Corynebacterium diphtheriae NCTC13129.</title>
        <authorList>
            <person name="Cerdeno-Tarraga A.-M."/>
            <person name="Efstratiou A."/>
            <person name="Dover L.G."/>
            <person name="Holden M.T.G."/>
            <person name="Pallen M.J."/>
            <person name="Bentley S.D."/>
            <person name="Besra G.S."/>
            <person name="Churcher C.M."/>
            <person name="James K.D."/>
            <person name="De Zoysa A."/>
            <person name="Chillingworth T."/>
            <person name="Cronin A."/>
            <person name="Dowd L."/>
            <person name="Feltwell T."/>
            <person name="Hamlin N."/>
            <person name="Holroyd S."/>
            <person name="Jagels K."/>
            <person name="Moule S."/>
            <person name="Quail M.A."/>
            <person name="Rabbinowitsch E."/>
            <person name="Rutherford K.M."/>
            <person name="Thomson N.R."/>
            <person name="Unwin L."/>
            <person name="Whitehead S."/>
            <person name="Barrell B.G."/>
            <person name="Parkhill J."/>
        </authorList>
    </citation>
    <scope>NUCLEOTIDE SEQUENCE [LARGE SCALE GENOMIC DNA]</scope>
    <source>
        <strain>ATCC 700971 / NCTC 13129 / Biotype gravis</strain>
    </source>
</reference>
<keyword id="KW-0963">Cytoplasm</keyword>
<keyword id="KW-0251">Elongation factor</keyword>
<keyword id="KW-0648">Protein biosynthesis</keyword>
<keyword id="KW-1185">Reference proteome</keyword>
<accession>Q6NH07</accession>
<proteinExistence type="inferred from homology"/>
<feature type="chain" id="PRO_0000094238" description="Elongation factor P">
    <location>
        <begin position="1"/>
        <end position="187"/>
    </location>
</feature>
<organism>
    <name type="scientific">Corynebacterium diphtheriae (strain ATCC 700971 / NCTC 13129 / Biotype gravis)</name>
    <dbReference type="NCBI Taxonomy" id="257309"/>
    <lineage>
        <taxon>Bacteria</taxon>
        <taxon>Bacillati</taxon>
        <taxon>Actinomycetota</taxon>
        <taxon>Actinomycetes</taxon>
        <taxon>Mycobacteriales</taxon>
        <taxon>Corynebacteriaceae</taxon>
        <taxon>Corynebacterium</taxon>
    </lineage>
</organism>
<comment type="function">
    <text evidence="1">Involved in peptide bond synthesis. Stimulates efficient translation and peptide-bond synthesis on native or reconstituted 70S ribosomes in vitro. Probably functions indirectly by altering the affinity of the ribosome for aminoacyl-tRNA, thus increasing their reactivity as acceptors for peptidyl transferase.</text>
</comment>
<comment type="pathway">
    <text evidence="1">Protein biosynthesis; polypeptide chain elongation.</text>
</comment>
<comment type="subcellular location">
    <subcellularLocation>
        <location evidence="1">Cytoplasm</location>
    </subcellularLocation>
</comment>
<comment type="similarity">
    <text evidence="1">Belongs to the elongation factor P family.</text>
</comment>
<gene>
    <name evidence="1" type="primary">efp</name>
    <name type="ordered locus">DIP1340</name>
</gene>
<evidence type="ECO:0000255" key="1">
    <source>
        <dbReference type="HAMAP-Rule" id="MF_00141"/>
    </source>
</evidence>
<sequence>MATTADFKNGLVLKIDNKLQQIIEFQHVKPGKGPAFVRTKLKDVVSGKVTDKTFNAGVKVETATVDRRDMTYLYNDGSSYVVMDEKTFEQAELAPHIFGDAARFLLENTTVQVSFHEGEPLFAELPISLDLRIEHTDPGLQGDRSTGGTKPATLETGAEIQVPLFIETGNVVKVDTRDGSYLSRVNN</sequence>
<dbReference type="EMBL" id="BX248357">
    <property type="protein sequence ID" value="CAE49868.1"/>
    <property type="molecule type" value="Genomic_DNA"/>
</dbReference>
<dbReference type="RefSeq" id="WP_003851660.1">
    <property type="nucleotide sequence ID" value="NC_002935.2"/>
</dbReference>
<dbReference type="SMR" id="Q6NH07"/>
<dbReference type="STRING" id="257309.DIP1340"/>
<dbReference type="GeneID" id="29421033"/>
<dbReference type="KEGG" id="cdi:DIP1340"/>
<dbReference type="HOGENOM" id="CLU_074944_0_1_11"/>
<dbReference type="UniPathway" id="UPA00345"/>
<dbReference type="Proteomes" id="UP000002198">
    <property type="component" value="Chromosome"/>
</dbReference>
<dbReference type="GO" id="GO:0005737">
    <property type="term" value="C:cytoplasm"/>
    <property type="evidence" value="ECO:0007669"/>
    <property type="project" value="UniProtKB-SubCell"/>
</dbReference>
<dbReference type="GO" id="GO:0003746">
    <property type="term" value="F:translation elongation factor activity"/>
    <property type="evidence" value="ECO:0007669"/>
    <property type="project" value="UniProtKB-UniRule"/>
</dbReference>
<dbReference type="GO" id="GO:0043043">
    <property type="term" value="P:peptide biosynthetic process"/>
    <property type="evidence" value="ECO:0007669"/>
    <property type="project" value="InterPro"/>
</dbReference>
<dbReference type="CDD" id="cd04470">
    <property type="entry name" value="S1_EF-P_repeat_1"/>
    <property type="match status" value="1"/>
</dbReference>
<dbReference type="CDD" id="cd05794">
    <property type="entry name" value="S1_EF-P_repeat_2"/>
    <property type="match status" value="1"/>
</dbReference>
<dbReference type="FunFam" id="2.30.30.30:FF:000003">
    <property type="entry name" value="Elongation factor P"/>
    <property type="match status" value="1"/>
</dbReference>
<dbReference type="FunFam" id="2.40.50.140:FF:000004">
    <property type="entry name" value="Elongation factor P"/>
    <property type="match status" value="1"/>
</dbReference>
<dbReference type="FunFam" id="2.40.50.140:FF:000009">
    <property type="entry name" value="Elongation factor P"/>
    <property type="match status" value="1"/>
</dbReference>
<dbReference type="Gene3D" id="2.30.30.30">
    <property type="match status" value="1"/>
</dbReference>
<dbReference type="Gene3D" id="2.40.50.140">
    <property type="entry name" value="Nucleic acid-binding proteins"/>
    <property type="match status" value="2"/>
</dbReference>
<dbReference type="HAMAP" id="MF_00141">
    <property type="entry name" value="EF_P"/>
    <property type="match status" value="1"/>
</dbReference>
<dbReference type="InterPro" id="IPR015365">
    <property type="entry name" value="Elong-fact-P_C"/>
</dbReference>
<dbReference type="InterPro" id="IPR012340">
    <property type="entry name" value="NA-bd_OB-fold"/>
</dbReference>
<dbReference type="InterPro" id="IPR014722">
    <property type="entry name" value="Rib_uL2_dom2"/>
</dbReference>
<dbReference type="InterPro" id="IPR020599">
    <property type="entry name" value="Transl_elong_fac_P/YeiP"/>
</dbReference>
<dbReference type="InterPro" id="IPR013185">
    <property type="entry name" value="Transl_elong_KOW-like"/>
</dbReference>
<dbReference type="InterPro" id="IPR001059">
    <property type="entry name" value="Transl_elong_P/YeiP_cen"/>
</dbReference>
<dbReference type="InterPro" id="IPR013852">
    <property type="entry name" value="Transl_elong_P/YeiP_CS"/>
</dbReference>
<dbReference type="InterPro" id="IPR011768">
    <property type="entry name" value="Transl_elongation_fac_P"/>
</dbReference>
<dbReference type="InterPro" id="IPR008991">
    <property type="entry name" value="Translation_prot_SH3-like_sf"/>
</dbReference>
<dbReference type="NCBIfam" id="TIGR00038">
    <property type="entry name" value="efp"/>
    <property type="match status" value="1"/>
</dbReference>
<dbReference type="NCBIfam" id="NF001810">
    <property type="entry name" value="PRK00529.1"/>
    <property type="match status" value="1"/>
</dbReference>
<dbReference type="PANTHER" id="PTHR30053">
    <property type="entry name" value="ELONGATION FACTOR P"/>
    <property type="match status" value="1"/>
</dbReference>
<dbReference type="PANTHER" id="PTHR30053:SF12">
    <property type="entry name" value="ELONGATION FACTOR P (EF-P) FAMILY PROTEIN"/>
    <property type="match status" value="1"/>
</dbReference>
<dbReference type="Pfam" id="PF01132">
    <property type="entry name" value="EFP"/>
    <property type="match status" value="1"/>
</dbReference>
<dbReference type="Pfam" id="PF08207">
    <property type="entry name" value="EFP_N"/>
    <property type="match status" value="1"/>
</dbReference>
<dbReference type="Pfam" id="PF09285">
    <property type="entry name" value="Elong-fact-P_C"/>
    <property type="match status" value="1"/>
</dbReference>
<dbReference type="PIRSF" id="PIRSF005901">
    <property type="entry name" value="EF-P"/>
    <property type="match status" value="1"/>
</dbReference>
<dbReference type="SMART" id="SM01185">
    <property type="entry name" value="EFP"/>
    <property type="match status" value="1"/>
</dbReference>
<dbReference type="SMART" id="SM00841">
    <property type="entry name" value="Elong-fact-P_C"/>
    <property type="match status" value="1"/>
</dbReference>
<dbReference type="SUPFAM" id="SSF50249">
    <property type="entry name" value="Nucleic acid-binding proteins"/>
    <property type="match status" value="2"/>
</dbReference>
<dbReference type="SUPFAM" id="SSF50104">
    <property type="entry name" value="Translation proteins SH3-like domain"/>
    <property type="match status" value="1"/>
</dbReference>
<dbReference type="PROSITE" id="PS01275">
    <property type="entry name" value="EFP"/>
    <property type="match status" value="1"/>
</dbReference>
<protein>
    <recommendedName>
        <fullName evidence="1">Elongation factor P</fullName>
        <shortName evidence="1">EF-P</shortName>
    </recommendedName>
</protein>